<accession>P50647</accession>
<dbReference type="EC" id="1.17.4.1"/>
<dbReference type="EMBL" id="AF205580">
    <property type="protein sequence ID" value="AAA29755.1"/>
    <property type="molecule type" value="Genomic_DNA"/>
</dbReference>
<dbReference type="PIR" id="B48687">
    <property type="entry name" value="B48687"/>
</dbReference>
<dbReference type="SMR" id="P50647"/>
<dbReference type="GO" id="GO:0005971">
    <property type="term" value="C:ribonucleoside-diphosphate reductase complex"/>
    <property type="evidence" value="ECO:0007669"/>
    <property type="project" value="TreeGrafter"/>
</dbReference>
<dbReference type="GO" id="GO:0005524">
    <property type="term" value="F:ATP binding"/>
    <property type="evidence" value="ECO:0007669"/>
    <property type="project" value="UniProtKB-KW"/>
</dbReference>
<dbReference type="GO" id="GO:0004748">
    <property type="term" value="F:ribonucleoside-diphosphate reductase activity, thioredoxin disulfide as acceptor"/>
    <property type="evidence" value="ECO:0000250"/>
    <property type="project" value="UniProtKB"/>
</dbReference>
<dbReference type="GO" id="GO:0009263">
    <property type="term" value="P:deoxyribonucleotide biosynthetic process"/>
    <property type="evidence" value="ECO:0000250"/>
    <property type="project" value="UniProtKB"/>
</dbReference>
<dbReference type="CDD" id="cd01679">
    <property type="entry name" value="RNR_I"/>
    <property type="match status" value="1"/>
</dbReference>
<dbReference type="FunFam" id="3.20.70.20:FF:000010">
    <property type="entry name" value="Ribonucleoside-diphosphate reductase"/>
    <property type="match status" value="1"/>
</dbReference>
<dbReference type="Gene3D" id="3.20.70.20">
    <property type="match status" value="1"/>
</dbReference>
<dbReference type="InterPro" id="IPR005144">
    <property type="entry name" value="ATP-cone_dom"/>
</dbReference>
<dbReference type="InterPro" id="IPR013346">
    <property type="entry name" value="NrdE_NrdA_C"/>
</dbReference>
<dbReference type="InterPro" id="IPR000788">
    <property type="entry name" value="RNR_lg_C"/>
</dbReference>
<dbReference type="InterPro" id="IPR013509">
    <property type="entry name" value="RNR_lsu_N"/>
</dbReference>
<dbReference type="InterPro" id="IPR008926">
    <property type="entry name" value="RNR_R1-su_N"/>
</dbReference>
<dbReference type="InterPro" id="IPR039718">
    <property type="entry name" value="Rrm1"/>
</dbReference>
<dbReference type="NCBIfam" id="TIGR02506">
    <property type="entry name" value="NrdE_NrdA"/>
    <property type="match status" value="1"/>
</dbReference>
<dbReference type="PANTHER" id="PTHR11573">
    <property type="entry name" value="RIBONUCLEOSIDE-DIPHOSPHATE REDUCTASE LARGE CHAIN"/>
    <property type="match status" value="1"/>
</dbReference>
<dbReference type="PANTHER" id="PTHR11573:SF6">
    <property type="entry name" value="RIBONUCLEOSIDE-DIPHOSPHATE REDUCTASE LARGE SUBUNIT"/>
    <property type="match status" value="1"/>
</dbReference>
<dbReference type="Pfam" id="PF03477">
    <property type="entry name" value="ATP-cone"/>
    <property type="match status" value="1"/>
</dbReference>
<dbReference type="Pfam" id="PF02867">
    <property type="entry name" value="Ribonuc_red_lgC"/>
    <property type="match status" value="1"/>
</dbReference>
<dbReference type="Pfam" id="PF00317">
    <property type="entry name" value="Ribonuc_red_lgN"/>
    <property type="match status" value="1"/>
</dbReference>
<dbReference type="PRINTS" id="PR01183">
    <property type="entry name" value="RIBORDTASEM1"/>
</dbReference>
<dbReference type="SUPFAM" id="SSF51998">
    <property type="entry name" value="PFL-like glycyl radical enzymes"/>
    <property type="match status" value="1"/>
</dbReference>
<dbReference type="SUPFAM" id="SSF48168">
    <property type="entry name" value="R1 subunit of ribonucleotide reductase, N-terminal domain"/>
    <property type="match status" value="1"/>
</dbReference>
<dbReference type="PROSITE" id="PS51161">
    <property type="entry name" value="ATP_CONE"/>
    <property type="match status" value="1"/>
</dbReference>
<dbReference type="PROSITE" id="PS00089">
    <property type="entry name" value="RIBORED_LARGE"/>
    <property type="match status" value="1"/>
</dbReference>
<sequence>MYVLNRKGEEEDISFDQILKRIQRLSYGLHKLGEYPACVTQGVINGMYSSIKTCELDELAAQTCAYMATTHPDFSILAARITTDNLHKNTSDDVAEVAEALYTYKDGRGRPASLISKEVYDFILLHKVRLNKEIDYTTHFNYDYFGFKTLERSYLLRINNKIIERPQHLLMRVSIGIHIDDIDKALETYHLMSQKYFTHATPTLFNSGTPRPQMSSCFLLSMKADSIEGIFETLKQCALISKTAGGIGVAVQDIRGQNSYIRGTNGISNGLVPMLRVFNDTARYVDQGGGKRKGSYAVYIEPWHSDIFEFLDLRKNHGKEELRARDLFYAVWVPDLFMKRVKENKNWTLMCPNECPGLSETWGEEFEKLYTKYEEENMGKKTVLAQDLWFAILQSQIETGVPIYLYKDSCNAKPIKNLGTIKCSNLCCEIIEYTSPDEVAVCNLASIALCKFVDLEKKEFNFKKLYEITKIITRNLDKIIERNYYPVKEAKTSNTRHRPIGIGVQGLADTFMLLRYLYESDAAKELNKRIYETMYYAALEMSVDWLQSGPYESYQGSPGSQGILQFDMWNAKVDNKYWDWDELKLKIAKTGLRNLLLLAPMPTASTSQILGNNESFEPYTSNIYYRRVLSGEFFVVNPHLLKDLFDRGLWDEDMKQQLIAHNGSIQYISEIPDDLKELYKTVWEIKQKNIIDMAADRGYFIDQSQSLNIYIQKPTFAKLSSMHFYGWEKGLKTGAYYLRTQAATDAIKFTVDTHVAKNAVKLKNADGVQITREVSRETIQLNQRYSKCVSFKSNNDEQCLMCSG</sequence>
<comment type="function">
    <text>Provides the precursors necessary for DNA synthesis. Catalyzes the biosynthesis of deoxyribonucleotides from the corresponding ribonucleotides.</text>
</comment>
<comment type="catalytic activity">
    <reaction>
        <text>a 2'-deoxyribonucleoside 5'-diphosphate + [thioredoxin]-disulfide + H2O = a ribonucleoside 5'-diphosphate + [thioredoxin]-dithiol</text>
        <dbReference type="Rhea" id="RHEA:23252"/>
        <dbReference type="Rhea" id="RHEA-COMP:10698"/>
        <dbReference type="Rhea" id="RHEA-COMP:10700"/>
        <dbReference type="ChEBI" id="CHEBI:15377"/>
        <dbReference type="ChEBI" id="CHEBI:29950"/>
        <dbReference type="ChEBI" id="CHEBI:50058"/>
        <dbReference type="ChEBI" id="CHEBI:57930"/>
        <dbReference type="ChEBI" id="CHEBI:73316"/>
        <dbReference type="EC" id="1.17.4.1"/>
    </reaction>
</comment>
<comment type="activity regulation">
    <text evidence="1">Under complex allosteric control mediated by deoxynucleoside triphosphates and ATP binding to separate specificity and activation sites on the large subunit. The type of nucleotide bound at the specificity site determines substrate preference. It seems probable that ATP makes the enzyme reduce CDP and UDP, dGTP favors ADP reduction and dTTP favors GDP reduction. Stimulated by ATP and inhibited by dATP binding to the activity site (By similarity).</text>
</comment>
<comment type="subunit">
    <text>Heterodimer of a large and a small subunit.</text>
</comment>
<comment type="similarity">
    <text evidence="4">Belongs to the ribonucleoside diphosphate reductase large chain family.</text>
</comment>
<organism>
    <name type="scientific">Plasmodium falciparum (isolate FCR-3 / Gambia)</name>
    <dbReference type="NCBI Taxonomy" id="5838"/>
    <lineage>
        <taxon>Eukaryota</taxon>
        <taxon>Sar</taxon>
        <taxon>Alveolata</taxon>
        <taxon>Apicomplexa</taxon>
        <taxon>Aconoidasida</taxon>
        <taxon>Haemosporida</taxon>
        <taxon>Plasmodiidae</taxon>
        <taxon>Plasmodium</taxon>
        <taxon>Plasmodium (Laverania)</taxon>
    </lineage>
</organism>
<name>RIR1_PLAFG</name>
<proteinExistence type="inferred from homology"/>
<evidence type="ECO:0000250" key="1"/>
<evidence type="ECO:0000250" key="2">
    <source>
        <dbReference type="UniProtKB" id="P23921"/>
    </source>
</evidence>
<evidence type="ECO:0000255" key="3">
    <source>
        <dbReference type="PROSITE-ProRule" id="PRU00492"/>
    </source>
</evidence>
<evidence type="ECO:0000305" key="4"/>
<protein>
    <recommendedName>
        <fullName>Ribonucleoside-diphosphate reductase large subunit</fullName>
        <ecNumber>1.17.4.1</ecNumber>
    </recommendedName>
    <alternativeName>
        <fullName>Ribonucleotide reductase R1 subunit</fullName>
    </alternativeName>
</protein>
<gene>
    <name type="primary">RNR1</name>
</gene>
<keyword id="KW-0021">Allosteric enzyme</keyword>
<keyword id="KW-0067">ATP-binding</keyword>
<keyword id="KW-0215">Deoxyribonucleotide synthesis</keyword>
<keyword id="KW-1015">Disulfide bond</keyword>
<keyword id="KW-0547">Nucleotide-binding</keyword>
<keyword id="KW-0560">Oxidoreductase</keyword>
<feature type="chain" id="PRO_0000187197" description="Ribonucleoside-diphosphate reductase large subunit">
    <location>
        <begin position="1"/>
        <end position="804"/>
    </location>
</feature>
<feature type="domain" description="ATP-cone" evidence="3">
    <location>
        <begin position="1"/>
        <end position="92"/>
    </location>
</feature>
<feature type="active site" description="Proton acceptor" evidence="1">
    <location>
        <position position="425"/>
    </location>
</feature>
<feature type="active site" description="Cysteine radical intermediate" evidence="1">
    <location>
        <position position="427"/>
    </location>
</feature>
<feature type="active site" description="Proton acceptor" evidence="1">
    <location>
        <position position="429"/>
    </location>
</feature>
<feature type="binding site" evidence="2">
    <location>
        <begin position="5"/>
        <end position="6"/>
    </location>
    <ligand>
        <name>ATP</name>
        <dbReference type="ChEBI" id="CHEBI:30616"/>
        <note>allosteric activator</note>
    </ligand>
</feature>
<feature type="binding site" evidence="2">
    <location>
        <begin position="11"/>
        <end position="17"/>
    </location>
    <ligand>
        <name>ATP</name>
        <dbReference type="ChEBI" id="CHEBI:30616"/>
        <note>allosteric activator</note>
    </ligand>
</feature>
<feature type="binding site" evidence="2">
    <location>
        <position position="53"/>
    </location>
    <ligand>
        <name>ATP</name>
        <dbReference type="ChEBI" id="CHEBI:30616"/>
        <note>allosteric activator</note>
    </ligand>
</feature>
<feature type="binding site" evidence="2">
    <location>
        <position position="57"/>
    </location>
    <ligand>
        <name>ATP</name>
        <dbReference type="ChEBI" id="CHEBI:30616"/>
        <note>allosteric activator</note>
    </ligand>
</feature>
<feature type="binding site" evidence="2">
    <location>
        <position position="216"/>
    </location>
    <ligand>
        <name>GDP</name>
        <dbReference type="ChEBI" id="CHEBI:58189"/>
    </ligand>
</feature>
<feature type="binding site" evidence="2">
    <location>
        <begin position="225"/>
        <end position="227"/>
    </location>
    <ligand>
        <name>dTTP</name>
        <dbReference type="ChEBI" id="CHEBI:37568"/>
        <note>allosteric effector that controls substrate specificity</note>
    </ligand>
</feature>
<feature type="binding site" evidence="2">
    <location>
        <position position="242"/>
    </location>
    <ligand>
        <name>dTTP</name>
        <dbReference type="ChEBI" id="CHEBI:37568"/>
        <note>allosteric effector that controls substrate specificity</note>
    </ligand>
</feature>
<feature type="binding site" evidence="2">
    <location>
        <position position="255"/>
    </location>
    <ligand>
        <name>dTTP</name>
        <dbReference type="ChEBI" id="CHEBI:37568"/>
        <note>allosteric effector that controls substrate specificity</note>
    </ligand>
</feature>
<feature type="binding site" evidence="2">
    <location>
        <begin position="262"/>
        <end position="263"/>
    </location>
    <ligand>
        <name>dTTP</name>
        <dbReference type="ChEBI" id="CHEBI:37568"/>
        <note>allosteric effector that controls substrate specificity</note>
    </ligand>
</feature>
<feature type="binding site" evidence="2">
    <location>
        <position position="425"/>
    </location>
    <ligand>
        <name>GDP</name>
        <dbReference type="ChEBI" id="CHEBI:58189"/>
    </ligand>
</feature>
<feature type="binding site" evidence="2">
    <location>
        <position position="429"/>
    </location>
    <ligand>
        <name>GDP</name>
        <dbReference type="ChEBI" id="CHEBI:58189"/>
    </ligand>
</feature>
<feature type="binding site" evidence="2">
    <location>
        <begin position="603"/>
        <end position="606"/>
    </location>
    <ligand>
        <name>GDP</name>
        <dbReference type="ChEBI" id="CHEBI:58189"/>
    </ligand>
</feature>
<feature type="site" description="Important for hydrogen atom transfer" evidence="1">
    <location>
        <position position="217"/>
    </location>
</feature>
<feature type="site" description="Important for hydrogen atom transfer" evidence="1">
    <location>
        <position position="442"/>
    </location>
</feature>
<feature type="site" description="Important for electron transfer" evidence="1">
    <location>
        <position position="736"/>
    </location>
</feature>
<feature type="site" description="Important for electron transfer" evidence="1">
    <location>
        <position position="737"/>
    </location>
</feature>
<feature type="site" description="Interacts with thioredoxin/glutaredoxin" evidence="1">
    <location>
        <position position="799"/>
    </location>
</feature>
<feature type="site" description="Interacts with thioredoxin/glutaredoxin" evidence="1">
    <location>
        <position position="802"/>
    </location>
</feature>
<feature type="disulfide bond" description="Redox-active" evidence="1">
    <location>
        <begin position="217"/>
        <end position="442"/>
    </location>
</feature>
<reference key="1">
    <citation type="journal article" date="1993" name="Proc. Natl. Acad. Sci. U.S.A.">
        <title>Cloning, sequence determination, and regulation of the ribonucleotide reductase subunits from Plasmodium falciparum: a target for antimalarial therapy.</title>
        <authorList>
            <person name="Rubin H."/>
            <person name="Salem J.S."/>
            <person name="Li L.S."/>
            <person name="Yang F.D."/>
            <person name="Mama S."/>
            <person name="Wang Z.M."/>
            <person name="Fisher A."/>
            <person name="Hamann C.S."/>
            <person name="Cooperman B.S."/>
        </authorList>
    </citation>
    <scope>NUCLEOTIDE SEQUENCE [GENOMIC DNA]</scope>
</reference>